<evidence type="ECO:0000255" key="1">
    <source>
        <dbReference type="HAMAP-Rule" id="MF_00323"/>
    </source>
</evidence>
<accession>A8F0B2</accession>
<reference key="1">
    <citation type="submission" date="2007-09" db="EMBL/GenBank/DDBJ databases">
        <title>Complete genome sequence of Rickettsia canadensis.</title>
        <authorList>
            <person name="Madan A."/>
            <person name="Fahey J."/>
            <person name="Helton E."/>
            <person name="Ketteman M."/>
            <person name="Madan A."/>
            <person name="Rodrigues S."/>
            <person name="Sanchez A."/>
            <person name="Whiting M."/>
            <person name="Dasch G."/>
            <person name="Eremeeva M."/>
        </authorList>
    </citation>
    <scope>NUCLEOTIDE SEQUENCE [LARGE SCALE GENOMIC DNA]</scope>
    <source>
        <strain>McKiel</strain>
    </source>
</reference>
<keyword id="KW-0963">Cytoplasm</keyword>
<keyword id="KW-0350">Heme biosynthesis</keyword>
<keyword id="KW-0408">Iron</keyword>
<keyword id="KW-0456">Lyase</keyword>
<keyword id="KW-0479">Metal-binding</keyword>
<keyword id="KW-0627">Porphyrin biosynthesis</keyword>
<gene>
    <name evidence="1" type="primary">hemH</name>
    <name type="ordered locus">A1E_05670</name>
</gene>
<dbReference type="EC" id="4.98.1.1" evidence="1"/>
<dbReference type="EMBL" id="CP000409">
    <property type="protein sequence ID" value="ABV74045.1"/>
    <property type="molecule type" value="Genomic_DNA"/>
</dbReference>
<dbReference type="RefSeq" id="WP_012149239.1">
    <property type="nucleotide sequence ID" value="NC_009879.1"/>
</dbReference>
<dbReference type="SMR" id="A8F0B2"/>
<dbReference type="STRING" id="293613.A1E_05670"/>
<dbReference type="KEGG" id="rcm:A1E_05670"/>
<dbReference type="eggNOG" id="COG0276">
    <property type="taxonomic scope" value="Bacteria"/>
</dbReference>
<dbReference type="HOGENOM" id="CLU_018884_1_0_5"/>
<dbReference type="UniPathway" id="UPA00252">
    <property type="reaction ID" value="UER00325"/>
</dbReference>
<dbReference type="Proteomes" id="UP000007056">
    <property type="component" value="Chromosome"/>
</dbReference>
<dbReference type="GO" id="GO:0005737">
    <property type="term" value="C:cytoplasm"/>
    <property type="evidence" value="ECO:0007669"/>
    <property type="project" value="UniProtKB-SubCell"/>
</dbReference>
<dbReference type="GO" id="GO:0004325">
    <property type="term" value="F:ferrochelatase activity"/>
    <property type="evidence" value="ECO:0007669"/>
    <property type="project" value="UniProtKB-UniRule"/>
</dbReference>
<dbReference type="GO" id="GO:0046872">
    <property type="term" value="F:metal ion binding"/>
    <property type="evidence" value="ECO:0007669"/>
    <property type="project" value="UniProtKB-KW"/>
</dbReference>
<dbReference type="GO" id="GO:0006783">
    <property type="term" value="P:heme biosynthetic process"/>
    <property type="evidence" value="ECO:0007669"/>
    <property type="project" value="UniProtKB-UniRule"/>
</dbReference>
<dbReference type="CDD" id="cd00419">
    <property type="entry name" value="Ferrochelatase_C"/>
    <property type="match status" value="1"/>
</dbReference>
<dbReference type="CDD" id="cd03411">
    <property type="entry name" value="Ferrochelatase_N"/>
    <property type="match status" value="1"/>
</dbReference>
<dbReference type="Gene3D" id="3.40.50.1400">
    <property type="match status" value="2"/>
</dbReference>
<dbReference type="HAMAP" id="MF_00323">
    <property type="entry name" value="Ferrochelatase"/>
    <property type="match status" value="1"/>
</dbReference>
<dbReference type="InterPro" id="IPR001015">
    <property type="entry name" value="Ferrochelatase"/>
</dbReference>
<dbReference type="InterPro" id="IPR019772">
    <property type="entry name" value="Ferrochelatase_AS"/>
</dbReference>
<dbReference type="InterPro" id="IPR033644">
    <property type="entry name" value="Ferrochelatase_C"/>
</dbReference>
<dbReference type="InterPro" id="IPR033659">
    <property type="entry name" value="Ferrochelatase_N"/>
</dbReference>
<dbReference type="NCBIfam" id="TIGR00109">
    <property type="entry name" value="hemH"/>
    <property type="match status" value="1"/>
</dbReference>
<dbReference type="PANTHER" id="PTHR11108">
    <property type="entry name" value="FERROCHELATASE"/>
    <property type="match status" value="1"/>
</dbReference>
<dbReference type="PANTHER" id="PTHR11108:SF1">
    <property type="entry name" value="FERROCHELATASE, MITOCHONDRIAL"/>
    <property type="match status" value="1"/>
</dbReference>
<dbReference type="Pfam" id="PF00762">
    <property type="entry name" value="Ferrochelatase"/>
    <property type="match status" value="1"/>
</dbReference>
<dbReference type="SUPFAM" id="SSF53800">
    <property type="entry name" value="Chelatase"/>
    <property type="match status" value="1"/>
</dbReference>
<dbReference type="PROSITE" id="PS00534">
    <property type="entry name" value="FERROCHELATASE"/>
    <property type="match status" value="1"/>
</dbReference>
<organism>
    <name type="scientific">Rickettsia canadensis (strain McKiel)</name>
    <dbReference type="NCBI Taxonomy" id="293613"/>
    <lineage>
        <taxon>Bacteria</taxon>
        <taxon>Pseudomonadati</taxon>
        <taxon>Pseudomonadota</taxon>
        <taxon>Alphaproteobacteria</taxon>
        <taxon>Rickettsiales</taxon>
        <taxon>Rickettsiaceae</taxon>
        <taxon>Rickettsieae</taxon>
        <taxon>Rickettsia</taxon>
        <taxon>belli group</taxon>
    </lineage>
</organism>
<protein>
    <recommendedName>
        <fullName evidence="1">Ferrochelatase</fullName>
        <ecNumber evidence="1">4.98.1.1</ecNumber>
    </recommendedName>
    <alternativeName>
        <fullName evidence="1">Heme synthase</fullName>
    </alternativeName>
    <alternativeName>
        <fullName evidence="1">Protoheme ferro-lyase</fullName>
    </alternativeName>
</protein>
<name>HEMH_RICCK</name>
<sequence length="347" mass="39900">MKKRIAIVLFNLGGPNSLELVKPFLFNLFYDKAIINLPNPLRYIIAKIISIIRERKSQKIYSLIGGKSSLLQETQEQRLLLTKKLKQLIKEDFAVFINMRYSAPFVKETINQIKKYNPSEIILLPLYPQFSSTTTGSSVKNFLQNLDIPIKTLDIPIKTVCCYPLEEDFIKAHVSLIKEKLYDKNFCILFSAHGLPEKIIKAGDPYSFQIKETVKAIVKELNIKDLDYKITYQSRVGPIEWLKPNTEDEIELAGKLKKDVIIVPISFVSEHVETLVELDIEYKLIADKYEIQYTRIPTLGTNKIFINSLTNILLRFINKVDTNLVTSSSSTRICPNEFTKCLCKLKN</sequence>
<proteinExistence type="inferred from homology"/>
<comment type="function">
    <text evidence="1">Catalyzes the ferrous insertion into protoporphyrin IX.</text>
</comment>
<comment type="catalytic activity">
    <reaction evidence="1">
        <text>heme b + 2 H(+) = protoporphyrin IX + Fe(2+)</text>
        <dbReference type="Rhea" id="RHEA:22584"/>
        <dbReference type="ChEBI" id="CHEBI:15378"/>
        <dbReference type="ChEBI" id="CHEBI:29033"/>
        <dbReference type="ChEBI" id="CHEBI:57306"/>
        <dbReference type="ChEBI" id="CHEBI:60344"/>
        <dbReference type="EC" id="4.98.1.1"/>
    </reaction>
</comment>
<comment type="pathway">
    <text evidence="1">Porphyrin-containing compound metabolism; protoheme biosynthesis; protoheme from protoporphyrin-IX: step 1/1.</text>
</comment>
<comment type="subcellular location">
    <subcellularLocation>
        <location evidence="1">Cytoplasm</location>
    </subcellularLocation>
</comment>
<comment type="similarity">
    <text evidence="1">Belongs to the ferrochelatase family.</text>
</comment>
<feature type="chain" id="PRO_1000019364" description="Ferrochelatase">
    <location>
        <begin position="1"/>
        <end position="347"/>
    </location>
</feature>
<feature type="binding site" evidence="1">
    <location>
        <position position="193"/>
    </location>
    <ligand>
        <name>Fe cation</name>
        <dbReference type="ChEBI" id="CHEBI:24875"/>
    </ligand>
</feature>
<feature type="binding site" evidence="1">
    <location>
        <position position="273"/>
    </location>
    <ligand>
        <name>Fe cation</name>
        <dbReference type="ChEBI" id="CHEBI:24875"/>
    </ligand>
</feature>